<sequence length="511" mass="61429">MEKFEGYSEKLKFPRQYFVYPLLFQEYIYVFAHDYGLNGSELVEIIGSNNKKFSSLLVKRLMIRMYQQNFWINLVNHPNQDRLLDYNNFFYSEFYSQILSEGFAIVVEIPFSLREQSCPEEKEIPKFQNLRSIHSIFPFLEDKFLHLHYLAHIEIPYPIHLDILLQLLQYRIQDVPSLHLLRFFLNYYSNWNSFITSMKSIFILKKENKRLFRFLYNSYVSEYEFFLLFLRKQSSCLRLTSSGTFLERIIFSRKMEHFGLMYPAFFRKTIWFVMDPLMHYVRYQGKAILASKGTLLLKKKWKCYLVRLWQYSFSFWTQPQRIHLNQLENSCFDFLGYFSSVPINSLLVRNQMLENSFLIDTQMKKFDTKVPVTPLIGSLAKAQFCTGSGHPISKPIWTDLSDWDILDRFGRICRNLFHYYSGSSKKKTLYRLKYILRLSCARTLARKHKSTVRAFMQWLGSVFLEEFFTEEEQVFSLMFAKTTYFSFRGSHSERIWYLDILRINDLVNPLN</sequence>
<name>MATK_ORYNI</name>
<reference key="1">
    <citation type="journal article" date="2004" name="Gene">
        <title>The complete nucleotide sequence of wild rice (Oryza nivara) chloroplast genome: first genome wide comparative sequence analysis of wild and cultivated rice.</title>
        <authorList>
            <person name="Masood M.S."/>
            <person name="Nishikawa T."/>
            <person name="Fukuoka S."/>
            <person name="Njenga P.K."/>
            <person name="Tsudzuki T."/>
            <person name="Kadowaki K."/>
        </authorList>
    </citation>
    <scope>NUCLEOTIDE SEQUENCE [LARGE SCALE GENOMIC DNA]</scope>
    <source>
        <strain evidence="4">cv. SL10</strain>
    </source>
</reference>
<reference key="2">
    <citation type="journal article" date="1999" name="Proc. Natl. Acad. Sci. U.S.A.">
        <title>Phylogeny of rice genomes with emphasis on origins of allotetraploid species.</title>
        <authorList>
            <person name="Ge S."/>
            <person name="Sang T."/>
            <person name="Lu B.R."/>
            <person name="Hong D.Y."/>
        </authorList>
    </citation>
    <scope>NUCLEOTIDE SEQUENCE [GENOMIC DNA] OF 1-501</scope>
</reference>
<evidence type="ECO:0000250" key="1"/>
<evidence type="ECO:0000255" key="2">
    <source>
        <dbReference type="HAMAP-Rule" id="MF_01390"/>
    </source>
</evidence>
<evidence type="ECO:0000305" key="3"/>
<evidence type="ECO:0000312" key="4">
    <source>
        <dbReference type="Proteomes" id="UP000006591"/>
    </source>
</evidence>
<comment type="function">
    <text evidence="2">Usually encoded in the trnK tRNA gene intron. Probably assists in splicing its own and other chloroplast group II introns.</text>
</comment>
<comment type="subcellular location">
    <subcellularLocation>
        <location>Plastid</location>
        <location>Chloroplast</location>
    </subcellularLocation>
</comment>
<comment type="RNA editing">
    <location>
        <position position="420" evidence="1"/>
    </location>
</comment>
<comment type="similarity">
    <text evidence="2">Belongs to the intron maturase 2 family. MatK subfamily.</text>
</comment>
<comment type="sequence caution" evidence="3">
    <conflict type="erroneous initiation">
        <sequence resource="EMBL-CDS" id="AAF37161"/>
    </conflict>
    <text>Extended N-terminus.</text>
</comment>
<comment type="sequence caution" evidence="3">
    <conflict type="erroneous initiation">
        <sequence resource="EMBL-CDS" id="BAD26756"/>
    </conflict>
    <text>Extended N-terminus.</text>
</comment>
<gene>
    <name evidence="2" type="primary">matK</name>
</gene>
<dbReference type="EMBL" id="AP006728">
    <property type="protein sequence ID" value="BAD26756.1"/>
    <property type="status" value="ALT_SEQ"/>
    <property type="molecule type" value="Genomic_DNA"/>
</dbReference>
<dbReference type="EMBL" id="AF148652">
    <property type="protein sequence ID" value="AAF37161.1"/>
    <property type="status" value="ALT_SEQ"/>
    <property type="molecule type" value="Genomic_DNA"/>
</dbReference>
<dbReference type="RefSeq" id="YP_052727.2">
    <property type="nucleotide sequence ID" value="NC_005973.1"/>
</dbReference>
<dbReference type="STRING" id="4536.Q6ENJ6"/>
<dbReference type="GeneID" id="2885896"/>
<dbReference type="Proteomes" id="UP000006591">
    <property type="component" value="Chloroplast"/>
</dbReference>
<dbReference type="GO" id="GO:0009507">
    <property type="term" value="C:chloroplast"/>
    <property type="evidence" value="ECO:0007669"/>
    <property type="project" value="UniProtKB-SubCell"/>
</dbReference>
<dbReference type="GO" id="GO:0009536">
    <property type="term" value="C:plastid"/>
    <property type="evidence" value="ECO:0000305"/>
    <property type="project" value="Gramene"/>
</dbReference>
<dbReference type="GO" id="GO:0003723">
    <property type="term" value="F:RNA binding"/>
    <property type="evidence" value="ECO:0007669"/>
    <property type="project" value="UniProtKB-KW"/>
</dbReference>
<dbReference type="GO" id="GO:0006397">
    <property type="term" value="P:mRNA processing"/>
    <property type="evidence" value="ECO:0007669"/>
    <property type="project" value="UniProtKB-KW"/>
</dbReference>
<dbReference type="GO" id="GO:0008380">
    <property type="term" value="P:RNA splicing"/>
    <property type="evidence" value="ECO:0007669"/>
    <property type="project" value="UniProtKB-UniRule"/>
</dbReference>
<dbReference type="GO" id="GO:0008033">
    <property type="term" value="P:tRNA processing"/>
    <property type="evidence" value="ECO:0007669"/>
    <property type="project" value="UniProtKB-KW"/>
</dbReference>
<dbReference type="HAMAP" id="MF_01390">
    <property type="entry name" value="MatK"/>
    <property type="match status" value="1"/>
</dbReference>
<dbReference type="InterPro" id="IPR024937">
    <property type="entry name" value="Domain_X"/>
</dbReference>
<dbReference type="InterPro" id="IPR002866">
    <property type="entry name" value="Maturase_MatK"/>
</dbReference>
<dbReference type="InterPro" id="IPR024942">
    <property type="entry name" value="Maturase_MatK_N"/>
</dbReference>
<dbReference type="PANTHER" id="PTHR34811">
    <property type="entry name" value="MATURASE K"/>
    <property type="match status" value="1"/>
</dbReference>
<dbReference type="PANTHER" id="PTHR34811:SF1">
    <property type="entry name" value="MATURASE K"/>
    <property type="match status" value="1"/>
</dbReference>
<dbReference type="Pfam" id="PF01348">
    <property type="entry name" value="Intron_maturas2"/>
    <property type="match status" value="1"/>
</dbReference>
<dbReference type="Pfam" id="PF01824">
    <property type="entry name" value="MatK_N"/>
    <property type="match status" value="1"/>
</dbReference>
<geneLocation type="chloroplast"/>
<keyword id="KW-0150">Chloroplast</keyword>
<keyword id="KW-0507">mRNA processing</keyword>
<keyword id="KW-0934">Plastid</keyword>
<keyword id="KW-1185">Reference proteome</keyword>
<keyword id="KW-0691">RNA editing</keyword>
<keyword id="KW-0694">RNA-binding</keyword>
<keyword id="KW-0819">tRNA processing</keyword>
<accession>Q6ENJ6</accession>
<accession>Q9MV43</accession>
<proteinExistence type="inferred from homology"/>
<feature type="chain" id="PRO_0000143561" description="Maturase K">
    <location>
        <begin position="1"/>
        <end position="511"/>
    </location>
</feature>
<feature type="sequence conflict" description="In Ref. 2; AAF37161." evidence="3" ref="2">
    <original>I</original>
    <variation>L</variation>
    <location>
        <position position="46"/>
    </location>
</feature>
<feature type="sequence conflict" description="In Ref. 2; AAF37161." evidence="3" ref="2">
    <original>E</original>
    <variation>A</variation>
    <location>
        <position position="328"/>
    </location>
</feature>
<protein>
    <recommendedName>
        <fullName evidence="2">Maturase K</fullName>
    </recommendedName>
    <alternativeName>
        <fullName evidence="2">Intron maturase</fullName>
    </alternativeName>
</protein>
<organism>
    <name type="scientific">Oryza nivara</name>
    <name type="common">Indian wild rice</name>
    <name type="synonym">Oryza sativa f. spontanea</name>
    <dbReference type="NCBI Taxonomy" id="4536"/>
    <lineage>
        <taxon>Eukaryota</taxon>
        <taxon>Viridiplantae</taxon>
        <taxon>Streptophyta</taxon>
        <taxon>Embryophyta</taxon>
        <taxon>Tracheophyta</taxon>
        <taxon>Spermatophyta</taxon>
        <taxon>Magnoliopsida</taxon>
        <taxon>Liliopsida</taxon>
        <taxon>Poales</taxon>
        <taxon>Poaceae</taxon>
        <taxon>BOP clade</taxon>
        <taxon>Oryzoideae</taxon>
        <taxon>Oryzeae</taxon>
        <taxon>Oryzinae</taxon>
        <taxon>Oryza</taxon>
    </lineage>
</organism>